<dbReference type="EC" id="3.1.1.96" evidence="1"/>
<dbReference type="EMBL" id="CP000539">
    <property type="protein sequence ID" value="ABM43817.1"/>
    <property type="molecule type" value="Genomic_DNA"/>
</dbReference>
<dbReference type="RefSeq" id="WP_011806799.1">
    <property type="nucleotide sequence ID" value="NZ_CP016278.1"/>
</dbReference>
<dbReference type="SMR" id="A1WC42"/>
<dbReference type="STRING" id="232721.Ajs_3706"/>
<dbReference type="GeneID" id="84682998"/>
<dbReference type="KEGG" id="ajs:Ajs_3706"/>
<dbReference type="eggNOG" id="COG1490">
    <property type="taxonomic scope" value="Bacteria"/>
</dbReference>
<dbReference type="HOGENOM" id="CLU_076901_1_1_4"/>
<dbReference type="Proteomes" id="UP000000645">
    <property type="component" value="Chromosome"/>
</dbReference>
<dbReference type="GO" id="GO:0005737">
    <property type="term" value="C:cytoplasm"/>
    <property type="evidence" value="ECO:0007669"/>
    <property type="project" value="UniProtKB-SubCell"/>
</dbReference>
<dbReference type="GO" id="GO:0051500">
    <property type="term" value="F:D-tyrosyl-tRNA(Tyr) deacylase activity"/>
    <property type="evidence" value="ECO:0007669"/>
    <property type="project" value="TreeGrafter"/>
</dbReference>
<dbReference type="GO" id="GO:0106026">
    <property type="term" value="F:Gly-tRNA(Ala) deacylase activity"/>
    <property type="evidence" value="ECO:0007669"/>
    <property type="project" value="UniProtKB-UniRule"/>
</dbReference>
<dbReference type="GO" id="GO:0043908">
    <property type="term" value="F:Ser(Gly)-tRNA(Ala) hydrolase activity"/>
    <property type="evidence" value="ECO:0007669"/>
    <property type="project" value="UniProtKB-UniRule"/>
</dbReference>
<dbReference type="GO" id="GO:0000049">
    <property type="term" value="F:tRNA binding"/>
    <property type="evidence" value="ECO:0007669"/>
    <property type="project" value="UniProtKB-UniRule"/>
</dbReference>
<dbReference type="GO" id="GO:0019478">
    <property type="term" value="P:D-amino acid catabolic process"/>
    <property type="evidence" value="ECO:0007669"/>
    <property type="project" value="UniProtKB-UniRule"/>
</dbReference>
<dbReference type="CDD" id="cd00563">
    <property type="entry name" value="Dtyr_deacylase"/>
    <property type="match status" value="1"/>
</dbReference>
<dbReference type="FunFam" id="3.50.80.10:FF:000001">
    <property type="entry name" value="D-aminoacyl-tRNA deacylase"/>
    <property type="match status" value="1"/>
</dbReference>
<dbReference type="Gene3D" id="3.50.80.10">
    <property type="entry name" value="D-tyrosyl-tRNA(Tyr) deacylase"/>
    <property type="match status" value="1"/>
</dbReference>
<dbReference type="HAMAP" id="MF_00518">
    <property type="entry name" value="Deacylase_Dtd"/>
    <property type="match status" value="1"/>
</dbReference>
<dbReference type="InterPro" id="IPR003732">
    <property type="entry name" value="Daa-tRNA_deacyls_DTD"/>
</dbReference>
<dbReference type="InterPro" id="IPR023509">
    <property type="entry name" value="DTD-like_sf"/>
</dbReference>
<dbReference type="NCBIfam" id="TIGR00256">
    <property type="entry name" value="D-aminoacyl-tRNA deacylase"/>
    <property type="match status" value="1"/>
</dbReference>
<dbReference type="PANTHER" id="PTHR10472:SF5">
    <property type="entry name" value="D-AMINOACYL-TRNA DEACYLASE 1"/>
    <property type="match status" value="1"/>
</dbReference>
<dbReference type="PANTHER" id="PTHR10472">
    <property type="entry name" value="D-TYROSYL-TRNA TYR DEACYLASE"/>
    <property type="match status" value="1"/>
</dbReference>
<dbReference type="Pfam" id="PF02580">
    <property type="entry name" value="Tyr_Deacylase"/>
    <property type="match status" value="1"/>
</dbReference>
<dbReference type="SUPFAM" id="SSF69500">
    <property type="entry name" value="DTD-like"/>
    <property type="match status" value="1"/>
</dbReference>
<name>DTD_ACISJ</name>
<gene>
    <name evidence="1" type="primary">dtd</name>
    <name type="ordered locus">Ajs_3706</name>
</gene>
<comment type="function">
    <text evidence="1">An aminoacyl-tRNA editing enzyme that deacylates mischarged D-aminoacyl-tRNAs. Also deacylates mischarged glycyl-tRNA(Ala), protecting cells against glycine mischarging by AlaRS. Acts via tRNA-based rather than protein-based catalysis; rejects L-amino acids rather than detecting D-amino acids in the active site. By recycling D-aminoacyl-tRNA to D-amino acids and free tRNA molecules, this enzyme counteracts the toxicity associated with the formation of D-aminoacyl-tRNA entities in vivo and helps enforce protein L-homochirality.</text>
</comment>
<comment type="catalytic activity">
    <reaction evidence="1">
        <text>glycyl-tRNA(Ala) + H2O = tRNA(Ala) + glycine + H(+)</text>
        <dbReference type="Rhea" id="RHEA:53744"/>
        <dbReference type="Rhea" id="RHEA-COMP:9657"/>
        <dbReference type="Rhea" id="RHEA-COMP:13640"/>
        <dbReference type="ChEBI" id="CHEBI:15377"/>
        <dbReference type="ChEBI" id="CHEBI:15378"/>
        <dbReference type="ChEBI" id="CHEBI:57305"/>
        <dbReference type="ChEBI" id="CHEBI:78442"/>
        <dbReference type="ChEBI" id="CHEBI:78522"/>
        <dbReference type="EC" id="3.1.1.96"/>
    </reaction>
</comment>
<comment type="catalytic activity">
    <reaction evidence="1">
        <text>a D-aminoacyl-tRNA + H2O = a tRNA + a D-alpha-amino acid + H(+)</text>
        <dbReference type="Rhea" id="RHEA:13953"/>
        <dbReference type="Rhea" id="RHEA-COMP:10123"/>
        <dbReference type="Rhea" id="RHEA-COMP:10124"/>
        <dbReference type="ChEBI" id="CHEBI:15377"/>
        <dbReference type="ChEBI" id="CHEBI:15378"/>
        <dbReference type="ChEBI" id="CHEBI:59871"/>
        <dbReference type="ChEBI" id="CHEBI:78442"/>
        <dbReference type="ChEBI" id="CHEBI:79333"/>
        <dbReference type="EC" id="3.1.1.96"/>
    </reaction>
</comment>
<comment type="subunit">
    <text evidence="1">Homodimer.</text>
</comment>
<comment type="subcellular location">
    <subcellularLocation>
        <location evidence="1">Cytoplasm</location>
    </subcellularLocation>
</comment>
<comment type="domain">
    <text evidence="1">A Gly-cisPro motif from one monomer fits into the active site of the other monomer to allow specific chiral rejection of L-amino acids.</text>
</comment>
<comment type="similarity">
    <text evidence="1">Belongs to the DTD family.</text>
</comment>
<sequence length="154" mass="16366">MIGLLQRVREARVEVAGEIVGRIGPGLLALVCAEQGDSEAQADKLLAKMLKLRIFSDEAGKMNRSVQDLDGQGTCGGLLIVSQFTLAADTRGGNRPSFTQAAPPAQGERLYDYFVAQARAVHPMVATGRFAADMQVHLVNDGPVTLPLRIAPPG</sequence>
<feature type="chain" id="PRO_1000050806" description="D-aminoacyl-tRNA deacylase">
    <location>
        <begin position="1"/>
        <end position="154"/>
    </location>
</feature>
<feature type="short sequence motif" description="Gly-cisPro motif, important for rejection of L-amino acids" evidence="1">
    <location>
        <begin position="142"/>
        <end position="143"/>
    </location>
</feature>
<evidence type="ECO:0000255" key="1">
    <source>
        <dbReference type="HAMAP-Rule" id="MF_00518"/>
    </source>
</evidence>
<keyword id="KW-0963">Cytoplasm</keyword>
<keyword id="KW-0378">Hydrolase</keyword>
<keyword id="KW-0694">RNA-binding</keyword>
<keyword id="KW-0820">tRNA-binding</keyword>
<reference key="1">
    <citation type="submission" date="2006-12" db="EMBL/GenBank/DDBJ databases">
        <title>Complete sequence of chromosome 1 of Acidovorax sp. JS42.</title>
        <authorList>
            <person name="Copeland A."/>
            <person name="Lucas S."/>
            <person name="Lapidus A."/>
            <person name="Barry K."/>
            <person name="Detter J.C."/>
            <person name="Glavina del Rio T."/>
            <person name="Dalin E."/>
            <person name="Tice H."/>
            <person name="Pitluck S."/>
            <person name="Chertkov O."/>
            <person name="Brettin T."/>
            <person name="Bruce D."/>
            <person name="Han C."/>
            <person name="Tapia R."/>
            <person name="Gilna P."/>
            <person name="Schmutz J."/>
            <person name="Larimer F."/>
            <person name="Land M."/>
            <person name="Hauser L."/>
            <person name="Kyrpides N."/>
            <person name="Kim E."/>
            <person name="Stahl D."/>
            <person name="Richardson P."/>
        </authorList>
    </citation>
    <scope>NUCLEOTIDE SEQUENCE [LARGE SCALE GENOMIC DNA]</scope>
    <source>
        <strain>JS42</strain>
    </source>
</reference>
<organism>
    <name type="scientific">Acidovorax sp. (strain JS42)</name>
    <dbReference type="NCBI Taxonomy" id="232721"/>
    <lineage>
        <taxon>Bacteria</taxon>
        <taxon>Pseudomonadati</taxon>
        <taxon>Pseudomonadota</taxon>
        <taxon>Betaproteobacteria</taxon>
        <taxon>Burkholderiales</taxon>
        <taxon>Comamonadaceae</taxon>
        <taxon>Acidovorax</taxon>
    </lineage>
</organism>
<proteinExistence type="inferred from homology"/>
<accession>A1WC42</accession>
<protein>
    <recommendedName>
        <fullName evidence="1">D-aminoacyl-tRNA deacylase</fullName>
        <shortName evidence="1">DTD</shortName>
        <ecNumber evidence="1">3.1.1.96</ecNumber>
    </recommendedName>
    <alternativeName>
        <fullName evidence="1">Gly-tRNA(Ala) deacylase</fullName>
    </alternativeName>
</protein>